<organism>
    <name type="scientific">Mus musculus</name>
    <name type="common">Mouse</name>
    <dbReference type="NCBI Taxonomy" id="10090"/>
    <lineage>
        <taxon>Eukaryota</taxon>
        <taxon>Metazoa</taxon>
        <taxon>Chordata</taxon>
        <taxon>Craniata</taxon>
        <taxon>Vertebrata</taxon>
        <taxon>Euteleostomi</taxon>
        <taxon>Mammalia</taxon>
        <taxon>Eutheria</taxon>
        <taxon>Euarchontoglires</taxon>
        <taxon>Glires</taxon>
        <taxon>Rodentia</taxon>
        <taxon>Myomorpha</taxon>
        <taxon>Muroidea</taxon>
        <taxon>Muridae</taxon>
        <taxon>Murinae</taxon>
        <taxon>Mus</taxon>
        <taxon>Mus</taxon>
    </lineage>
</organism>
<reference key="1">
    <citation type="journal article" date="2004" name="Genome Res.">
        <title>The status, quality, and expansion of the NIH full-length cDNA project: the Mammalian Gene Collection (MGC).</title>
        <authorList>
            <consortium name="The MGC Project Team"/>
        </authorList>
    </citation>
    <scope>NUCLEOTIDE SEQUENCE [LARGE SCALE MRNA]</scope>
    <source>
        <tissue>Limb</tissue>
    </source>
</reference>
<evidence type="ECO:0000250" key="1">
    <source>
        <dbReference type="UniProtKB" id="A0PJZ3"/>
    </source>
</evidence>
<evidence type="ECO:0000250" key="2">
    <source>
        <dbReference type="UniProtKB" id="Q4G148"/>
    </source>
</evidence>
<evidence type="ECO:0000255" key="3"/>
<evidence type="ECO:0000256" key="4">
    <source>
        <dbReference type="SAM" id="MobiDB-lite"/>
    </source>
</evidence>
<evidence type="ECO:0000305" key="5"/>
<comment type="function">
    <text evidence="1">Glycosyltransferase which elongates the O-linked glucose attached to EGF-like repeats in the extracellular domain of Notch proteins by catalyzing the addition of xylose.</text>
</comment>
<comment type="catalytic activity">
    <reaction evidence="2">
        <text>3-O-(beta-D-glucosyl)-L-seryl-[EGF-like domain protein] + UDP-alpha-D-xylose = 3-O-[alpha-D-xylosyl-(1-&gt;3)-beta-D-glucosyl]-L-seryl-[EGF-like domain protein] + UDP + H(+)</text>
        <dbReference type="Rhea" id="RHEA:56064"/>
        <dbReference type="Rhea" id="RHEA-COMP:14610"/>
        <dbReference type="Rhea" id="RHEA-COMP:14611"/>
        <dbReference type="ChEBI" id="CHEBI:15378"/>
        <dbReference type="ChEBI" id="CHEBI:57632"/>
        <dbReference type="ChEBI" id="CHEBI:58223"/>
        <dbReference type="ChEBI" id="CHEBI:140575"/>
        <dbReference type="ChEBI" id="CHEBI:140576"/>
        <dbReference type="EC" id="2.4.2.42"/>
    </reaction>
</comment>
<comment type="subcellular location">
    <subcellularLocation>
        <location evidence="5">Membrane</location>
        <topology evidence="5">Single-pass type II membrane protein</topology>
    </subcellularLocation>
</comment>
<comment type="similarity">
    <text evidence="5">Belongs to the glycosyltransferase 8 family.</text>
</comment>
<feature type="chain" id="PRO_0000288540" description="Glucoside xylosyltransferase 2">
    <location>
        <begin position="1"/>
        <end position="444"/>
    </location>
</feature>
<feature type="topological domain" description="Cytoplasmic" evidence="3">
    <location>
        <begin position="1"/>
        <end position="4"/>
    </location>
</feature>
<feature type="transmembrane region" description="Helical; Signal-anchor for type II membrane protein" evidence="3">
    <location>
        <begin position="5"/>
        <end position="25"/>
    </location>
</feature>
<feature type="topological domain" description="Lumenal" evidence="3">
    <location>
        <begin position="26"/>
        <end position="444"/>
    </location>
</feature>
<feature type="region of interest" description="Disordered" evidence="4">
    <location>
        <begin position="31"/>
        <end position="101"/>
    </location>
</feature>
<feature type="compositionally biased region" description="Basic residues" evidence="4">
    <location>
        <begin position="68"/>
        <end position="83"/>
    </location>
</feature>
<feature type="compositionally biased region" description="Basic and acidic residues" evidence="4">
    <location>
        <begin position="87"/>
        <end position="101"/>
    </location>
</feature>
<feature type="glycosylation site" description="N-linked (GlcNAc...) asparagine" evidence="3">
    <location>
        <position position="275"/>
    </location>
</feature>
<protein>
    <recommendedName>
        <fullName>Glucoside xylosyltransferase 2</fullName>
        <ecNumber evidence="2">2.4.2.42</ecNumber>
    </recommendedName>
    <alternativeName>
        <fullName>Glycosyltransferase 8 domain-containing protein 4</fullName>
    </alternativeName>
</protein>
<name>GXLT2_MOUSE</name>
<gene>
    <name type="primary">Gxylt2</name>
    <name type="synonym">Glt8d4</name>
</gene>
<dbReference type="EC" id="2.4.2.42" evidence="2"/>
<dbReference type="EMBL" id="BC049816">
    <property type="protein sequence ID" value="AAH49816.1"/>
    <property type="molecule type" value="mRNA"/>
</dbReference>
<dbReference type="CCDS" id="CCDS20390.1"/>
<dbReference type="RefSeq" id="NP_941014.1">
    <property type="nucleotide sequence ID" value="NM_198612.2"/>
</dbReference>
<dbReference type="SMR" id="Q810K9"/>
<dbReference type="BioGRID" id="231237">
    <property type="interactions" value="1"/>
</dbReference>
<dbReference type="FunCoup" id="Q810K9">
    <property type="interactions" value="51"/>
</dbReference>
<dbReference type="STRING" id="10090.ENSMUSP00000032157"/>
<dbReference type="CAZy" id="GT8">
    <property type="family name" value="Glycosyltransferase Family 8"/>
</dbReference>
<dbReference type="GlyCosmos" id="Q810K9">
    <property type="glycosylation" value="1 site, No reported glycans"/>
</dbReference>
<dbReference type="GlyGen" id="Q810K9">
    <property type="glycosylation" value="1 site"/>
</dbReference>
<dbReference type="iPTMnet" id="Q810K9"/>
<dbReference type="PhosphoSitePlus" id="Q810K9"/>
<dbReference type="PaxDb" id="10090-ENSMUSP00000032157"/>
<dbReference type="PeptideAtlas" id="Q810K9"/>
<dbReference type="ProteomicsDB" id="270906"/>
<dbReference type="Pumba" id="Q810K9"/>
<dbReference type="Antibodypedia" id="66937">
    <property type="antibodies" value="59 antibodies from 15 providers"/>
</dbReference>
<dbReference type="DNASU" id="232313"/>
<dbReference type="Ensembl" id="ENSMUST00000032157.9">
    <property type="protein sequence ID" value="ENSMUSP00000032157.8"/>
    <property type="gene ID" value="ENSMUSG00000030074.10"/>
</dbReference>
<dbReference type="GeneID" id="232313"/>
<dbReference type="KEGG" id="mmu:232313"/>
<dbReference type="UCSC" id="uc009dca.1">
    <property type="organism name" value="mouse"/>
</dbReference>
<dbReference type="AGR" id="MGI:2682940"/>
<dbReference type="CTD" id="727936"/>
<dbReference type="MGI" id="MGI:2682940">
    <property type="gene designation" value="Gxylt2"/>
</dbReference>
<dbReference type="VEuPathDB" id="HostDB:ENSMUSG00000030074"/>
<dbReference type="eggNOG" id="KOG3765">
    <property type="taxonomic scope" value="Eukaryota"/>
</dbReference>
<dbReference type="GeneTree" id="ENSGT00940000158065"/>
<dbReference type="HOGENOM" id="CLU_040965_0_0_1"/>
<dbReference type="InParanoid" id="Q810K9"/>
<dbReference type="OMA" id="HRIYSIT"/>
<dbReference type="OrthoDB" id="6238971at2759"/>
<dbReference type="PhylomeDB" id="Q810K9"/>
<dbReference type="TreeFam" id="TF323210"/>
<dbReference type="BioGRID-ORCS" id="232313">
    <property type="hits" value="2 hits in 78 CRISPR screens"/>
</dbReference>
<dbReference type="ChiTaRS" id="Gxylt2">
    <property type="organism name" value="mouse"/>
</dbReference>
<dbReference type="PRO" id="PR:Q810K9"/>
<dbReference type="Proteomes" id="UP000000589">
    <property type="component" value="Chromosome 6"/>
</dbReference>
<dbReference type="RNAct" id="Q810K9">
    <property type="molecule type" value="protein"/>
</dbReference>
<dbReference type="Bgee" id="ENSMUSG00000030074">
    <property type="expression patterns" value="Expressed in vault of skull and 150 other cell types or tissues"/>
</dbReference>
<dbReference type="GO" id="GO:0016020">
    <property type="term" value="C:membrane"/>
    <property type="evidence" value="ECO:0007669"/>
    <property type="project" value="UniProtKB-SubCell"/>
</dbReference>
<dbReference type="GO" id="GO:0140563">
    <property type="term" value="F:UDP-D-xylose:beta-D-glucoside alpha-1,3-D-xylosyltransferase activity"/>
    <property type="evidence" value="ECO:0007669"/>
    <property type="project" value="UniProtKB-EC"/>
</dbReference>
<dbReference type="GO" id="GO:0035252">
    <property type="term" value="F:UDP-xylosyltransferase activity"/>
    <property type="evidence" value="ECO:0000250"/>
    <property type="project" value="UniProtKB"/>
</dbReference>
<dbReference type="GO" id="GO:0016266">
    <property type="term" value="P:O-glycan processing"/>
    <property type="evidence" value="ECO:0000250"/>
    <property type="project" value="UniProtKB"/>
</dbReference>
<dbReference type="CDD" id="cd06430">
    <property type="entry name" value="GT8_like_2"/>
    <property type="match status" value="1"/>
</dbReference>
<dbReference type="FunFam" id="3.90.550.10:FF:000042">
    <property type="entry name" value="Glucoside xylosyltransferase 1"/>
    <property type="match status" value="1"/>
</dbReference>
<dbReference type="Gene3D" id="3.90.550.10">
    <property type="entry name" value="Spore Coat Polysaccharide Biosynthesis Protein SpsA, Chain A"/>
    <property type="match status" value="1"/>
</dbReference>
<dbReference type="InterPro" id="IPR002495">
    <property type="entry name" value="Glyco_trans_8"/>
</dbReference>
<dbReference type="InterPro" id="IPR051993">
    <property type="entry name" value="Glycosyltransferase_8"/>
</dbReference>
<dbReference type="InterPro" id="IPR029044">
    <property type="entry name" value="Nucleotide-diphossugar_trans"/>
</dbReference>
<dbReference type="PANTHER" id="PTHR46012:SF1">
    <property type="entry name" value="GLUCOSIDE XYLOSYLTRANSFERASE 2"/>
    <property type="match status" value="1"/>
</dbReference>
<dbReference type="PANTHER" id="PTHR46012">
    <property type="entry name" value="IP22168P"/>
    <property type="match status" value="1"/>
</dbReference>
<dbReference type="Pfam" id="PF01501">
    <property type="entry name" value="Glyco_transf_8"/>
    <property type="match status" value="1"/>
</dbReference>
<dbReference type="SUPFAM" id="SSF53448">
    <property type="entry name" value="Nucleotide-diphospho-sugar transferases"/>
    <property type="match status" value="1"/>
</dbReference>
<accession>Q810K9</accession>
<sequence>MKLRSKAAALLLLALAVLLLALLSLRARRDPEPPGFPARPEAAPQRRHAPVPTLPPEPRAFPGAAGRRSPRRQPPRLRPRAGRPRAASREKLARRPGETRSLHSVPPELWIHLAVVACGNRLEETLVMLKSAVLFSHRKMRFHIFTEDALKPEFDKQLRQWPDSYTKKFEHRLYPITFSVGNPQEWKKLFKPCAAQRLFLPAILKDVDSLLYVDTDVLFLRPVDDIWKLLRQFNSTQLAAMAPEHEIPKIGWYSRFARHPFYGSAGVNSGVMLMNLTRIRNTQFKNSLIPAGLAWEEMLLPLYQKYKSAITWGDQDLLNIIFYYNPECLYVFPCQWNYRPDHCMYGSNCKEAEREGVSVLHGNRGVYHDDKQPTFRALYEAIRDFPFQDNLFQSMYYPLQLKFLETVHTLCGRIPQVFLKQIEKTMRRAYEKHVIIHMGPNPMS</sequence>
<proteinExistence type="evidence at transcript level"/>
<keyword id="KW-0325">Glycoprotein</keyword>
<keyword id="KW-0328">Glycosyltransferase</keyword>
<keyword id="KW-0472">Membrane</keyword>
<keyword id="KW-1185">Reference proteome</keyword>
<keyword id="KW-0735">Signal-anchor</keyword>
<keyword id="KW-0808">Transferase</keyword>
<keyword id="KW-0812">Transmembrane</keyword>
<keyword id="KW-1133">Transmembrane helix</keyword>